<keyword id="KW-0030">Aminoacyl-tRNA synthetase</keyword>
<keyword id="KW-0067">ATP-binding</keyword>
<keyword id="KW-0963">Cytoplasm</keyword>
<keyword id="KW-0436">Ligase</keyword>
<keyword id="KW-0547">Nucleotide-binding</keyword>
<keyword id="KW-0648">Protein biosynthesis</keyword>
<accession>Q6YR88</accession>
<comment type="function">
    <text evidence="1">Catalyzes the attachment of L-aspartate to tRNA(Asp) in a two-step reaction: L-aspartate is first activated by ATP to form Asp-AMP and then transferred to the acceptor end of tRNA(Asp).</text>
</comment>
<comment type="catalytic activity">
    <reaction evidence="1">
        <text>tRNA(Asp) + L-aspartate + ATP = L-aspartyl-tRNA(Asp) + AMP + diphosphate</text>
        <dbReference type="Rhea" id="RHEA:19649"/>
        <dbReference type="Rhea" id="RHEA-COMP:9660"/>
        <dbReference type="Rhea" id="RHEA-COMP:9678"/>
        <dbReference type="ChEBI" id="CHEBI:29991"/>
        <dbReference type="ChEBI" id="CHEBI:30616"/>
        <dbReference type="ChEBI" id="CHEBI:33019"/>
        <dbReference type="ChEBI" id="CHEBI:78442"/>
        <dbReference type="ChEBI" id="CHEBI:78516"/>
        <dbReference type="ChEBI" id="CHEBI:456215"/>
        <dbReference type="EC" id="6.1.1.12"/>
    </reaction>
</comment>
<comment type="subunit">
    <text evidence="1">Homodimer.</text>
</comment>
<comment type="subcellular location">
    <subcellularLocation>
        <location evidence="1">Cytoplasm</location>
    </subcellularLocation>
</comment>
<comment type="similarity">
    <text evidence="1">Belongs to the class-II aminoacyl-tRNA synthetase family. Type 1 subfamily.</text>
</comment>
<organism>
    <name type="scientific">Onion yellows phytoplasma (strain OY-M)</name>
    <dbReference type="NCBI Taxonomy" id="262768"/>
    <lineage>
        <taxon>Bacteria</taxon>
        <taxon>Bacillati</taxon>
        <taxon>Mycoplasmatota</taxon>
        <taxon>Mollicutes</taxon>
        <taxon>Acholeplasmatales</taxon>
        <taxon>Acholeplasmataceae</taxon>
        <taxon>Candidatus Phytoplasma</taxon>
        <taxon>16SrI (Aster yellows group)</taxon>
    </lineage>
</organism>
<feature type="chain" id="PRO_0000110914" description="Aspartate--tRNA ligase">
    <location>
        <begin position="1"/>
        <end position="586"/>
    </location>
</feature>
<feature type="region of interest" description="Aspartate" evidence="1">
    <location>
        <begin position="197"/>
        <end position="200"/>
    </location>
</feature>
<feature type="binding site" evidence="1">
    <location>
        <position position="173"/>
    </location>
    <ligand>
        <name>L-aspartate</name>
        <dbReference type="ChEBI" id="CHEBI:29991"/>
    </ligand>
</feature>
<feature type="binding site" evidence="1">
    <location>
        <begin position="219"/>
        <end position="221"/>
    </location>
    <ligand>
        <name>ATP</name>
        <dbReference type="ChEBI" id="CHEBI:30616"/>
    </ligand>
</feature>
<feature type="binding site" evidence="1">
    <location>
        <position position="219"/>
    </location>
    <ligand>
        <name>L-aspartate</name>
        <dbReference type="ChEBI" id="CHEBI:29991"/>
    </ligand>
</feature>
<feature type="binding site" evidence="1">
    <location>
        <position position="228"/>
    </location>
    <ligand>
        <name>ATP</name>
        <dbReference type="ChEBI" id="CHEBI:30616"/>
    </ligand>
</feature>
<feature type="binding site" evidence="1">
    <location>
        <position position="448"/>
    </location>
    <ligand>
        <name>L-aspartate</name>
        <dbReference type="ChEBI" id="CHEBI:29991"/>
    </ligand>
</feature>
<feature type="binding site" evidence="1">
    <location>
        <position position="480"/>
    </location>
    <ligand>
        <name>ATP</name>
        <dbReference type="ChEBI" id="CHEBI:30616"/>
    </ligand>
</feature>
<feature type="binding site" evidence="1">
    <location>
        <position position="487"/>
    </location>
    <ligand>
        <name>L-aspartate</name>
        <dbReference type="ChEBI" id="CHEBI:29991"/>
    </ligand>
</feature>
<feature type="binding site" evidence="1">
    <location>
        <begin position="532"/>
        <end position="535"/>
    </location>
    <ligand>
        <name>ATP</name>
        <dbReference type="ChEBI" id="CHEBI:30616"/>
    </ligand>
</feature>
<name>SYD_ONYPE</name>
<proteinExistence type="inferred from homology"/>
<protein>
    <recommendedName>
        <fullName evidence="1">Aspartate--tRNA ligase</fullName>
        <ecNumber evidence="1">6.1.1.12</ecNumber>
    </recommendedName>
    <alternativeName>
        <fullName evidence="1">Aspartyl-tRNA synthetase</fullName>
        <shortName evidence="1">AspRS</shortName>
    </alternativeName>
</protein>
<dbReference type="EC" id="6.1.1.12" evidence="1"/>
<dbReference type="EMBL" id="AP006628">
    <property type="protein sequence ID" value="BAD04213.1"/>
    <property type="molecule type" value="Genomic_DNA"/>
</dbReference>
<dbReference type="SMR" id="Q6YR88"/>
<dbReference type="STRING" id="262768.PAM_128"/>
<dbReference type="KEGG" id="poy:PAM_128"/>
<dbReference type="eggNOG" id="COG0173">
    <property type="taxonomic scope" value="Bacteria"/>
</dbReference>
<dbReference type="HOGENOM" id="CLU_014330_3_2_14"/>
<dbReference type="BioCyc" id="OYEL262768:G1G26-160-MONOMER"/>
<dbReference type="Proteomes" id="UP000002523">
    <property type="component" value="Chromosome"/>
</dbReference>
<dbReference type="GO" id="GO:0005737">
    <property type="term" value="C:cytoplasm"/>
    <property type="evidence" value="ECO:0007669"/>
    <property type="project" value="UniProtKB-SubCell"/>
</dbReference>
<dbReference type="GO" id="GO:0004815">
    <property type="term" value="F:aspartate-tRNA ligase activity"/>
    <property type="evidence" value="ECO:0007669"/>
    <property type="project" value="UniProtKB-UniRule"/>
</dbReference>
<dbReference type="GO" id="GO:0005524">
    <property type="term" value="F:ATP binding"/>
    <property type="evidence" value="ECO:0007669"/>
    <property type="project" value="UniProtKB-UniRule"/>
</dbReference>
<dbReference type="GO" id="GO:0003676">
    <property type="term" value="F:nucleic acid binding"/>
    <property type="evidence" value="ECO:0007669"/>
    <property type="project" value="InterPro"/>
</dbReference>
<dbReference type="GO" id="GO:0006422">
    <property type="term" value="P:aspartyl-tRNA aminoacylation"/>
    <property type="evidence" value="ECO:0007669"/>
    <property type="project" value="UniProtKB-UniRule"/>
</dbReference>
<dbReference type="CDD" id="cd00777">
    <property type="entry name" value="AspRS_core"/>
    <property type="match status" value="1"/>
</dbReference>
<dbReference type="CDD" id="cd04317">
    <property type="entry name" value="EcAspRS_like_N"/>
    <property type="match status" value="1"/>
</dbReference>
<dbReference type="Gene3D" id="3.30.930.10">
    <property type="entry name" value="Bira Bifunctional Protein, Domain 2"/>
    <property type="match status" value="1"/>
</dbReference>
<dbReference type="Gene3D" id="3.30.1360.30">
    <property type="entry name" value="GAD-like domain"/>
    <property type="match status" value="1"/>
</dbReference>
<dbReference type="Gene3D" id="2.40.50.140">
    <property type="entry name" value="Nucleic acid-binding proteins"/>
    <property type="match status" value="1"/>
</dbReference>
<dbReference type="HAMAP" id="MF_00044">
    <property type="entry name" value="Asp_tRNA_synth_type1"/>
    <property type="match status" value="1"/>
</dbReference>
<dbReference type="InterPro" id="IPR004364">
    <property type="entry name" value="Aa-tRNA-synt_II"/>
</dbReference>
<dbReference type="InterPro" id="IPR006195">
    <property type="entry name" value="aa-tRNA-synth_II"/>
</dbReference>
<dbReference type="InterPro" id="IPR045864">
    <property type="entry name" value="aa-tRNA-synth_II/BPL/LPL"/>
</dbReference>
<dbReference type="InterPro" id="IPR004524">
    <property type="entry name" value="Asp-tRNA-ligase_1"/>
</dbReference>
<dbReference type="InterPro" id="IPR047089">
    <property type="entry name" value="Asp-tRNA-ligase_1_N"/>
</dbReference>
<dbReference type="InterPro" id="IPR002312">
    <property type="entry name" value="Asp/Asn-tRNA-synth_IIb"/>
</dbReference>
<dbReference type="InterPro" id="IPR047090">
    <property type="entry name" value="AspRS_core"/>
</dbReference>
<dbReference type="InterPro" id="IPR004115">
    <property type="entry name" value="GAD-like_sf"/>
</dbReference>
<dbReference type="InterPro" id="IPR012340">
    <property type="entry name" value="NA-bd_OB-fold"/>
</dbReference>
<dbReference type="InterPro" id="IPR004365">
    <property type="entry name" value="NA-bd_OB_tRNA"/>
</dbReference>
<dbReference type="NCBIfam" id="TIGR00459">
    <property type="entry name" value="aspS_bact"/>
    <property type="match status" value="1"/>
</dbReference>
<dbReference type="NCBIfam" id="NF001750">
    <property type="entry name" value="PRK00476.1"/>
    <property type="match status" value="1"/>
</dbReference>
<dbReference type="PANTHER" id="PTHR22594:SF5">
    <property type="entry name" value="ASPARTATE--TRNA LIGASE, MITOCHONDRIAL"/>
    <property type="match status" value="1"/>
</dbReference>
<dbReference type="PANTHER" id="PTHR22594">
    <property type="entry name" value="ASPARTYL/LYSYL-TRNA SYNTHETASE"/>
    <property type="match status" value="1"/>
</dbReference>
<dbReference type="Pfam" id="PF00152">
    <property type="entry name" value="tRNA-synt_2"/>
    <property type="match status" value="1"/>
</dbReference>
<dbReference type="Pfam" id="PF01336">
    <property type="entry name" value="tRNA_anti-codon"/>
    <property type="match status" value="1"/>
</dbReference>
<dbReference type="PRINTS" id="PR01042">
    <property type="entry name" value="TRNASYNTHASP"/>
</dbReference>
<dbReference type="SUPFAM" id="SSF55681">
    <property type="entry name" value="Class II aaRS and biotin synthetases"/>
    <property type="match status" value="1"/>
</dbReference>
<dbReference type="SUPFAM" id="SSF55261">
    <property type="entry name" value="GAD domain-like"/>
    <property type="match status" value="1"/>
</dbReference>
<dbReference type="SUPFAM" id="SSF50249">
    <property type="entry name" value="Nucleic acid-binding proteins"/>
    <property type="match status" value="1"/>
</dbReference>
<dbReference type="PROSITE" id="PS50862">
    <property type="entry name" value="AA_TRNA_LIGASE_II"/>
    <property type="match status" value="1"/>
</dbReference>
<reference key="1">
    <citation type="journal article" date="2004" name="Nat. Genet.">
        <title>Reductive evolution suggested from the complete genome sequence of a plant-pathogenic phytoplasma.</title>
        <authorList>
            <person name="Oshima K."/>
            <person name="Kakizawa S."/>
            <person name="Nishigawa H."/>
            <person name="Jung H.-Y."/>
            <person name="Wei W."/>
            <person name="Suzuki S."/>
            <person name="Arashida R."/>
            <person name="Nakata D."/>
            <person name="Miyata S."/>
            <person name="Ugaki M."/>
            <person name="Namba S."/>
        </authorList>
    </citation>
    <scope>NUCLEOTIDE SEQUENCE [LARGE SCALE GENOMIC DNA]</scope>
    <source>
        <strain>OY-M</strain>
    </source>
</reference>
<sequence length="586" mass="67521">MKTKYSHYNNQLQLAHQGKTVFLKGFIFRKRNLGKTLFFDLRDVSGIVQLLVKENNPQYDKIALIKLETVVQIKGQVIERINKNPDLPTGDIEILVSHIEILSEAQTLPLNVFQSQESLEETRLKYRYLDLRNPEVKHFLIQRHHITQSIRQTLLKNDFLELETLILSKSTPEGARDYLVPSRIYPGNFYALPQSPQLFKQLYMIAGFERYFQVARCFRDEDLRSDRQPEFSQIDIETSFLNQDEIMSLTEEIIVDLFANIWKKPLSQPFLRLTYQQAFELYGSDKPDLRNPLKITDFTTFFDTTTCPQNMFSGNIKGFKVSKTAVLTRRKLDEYQLFFSKHFNLKLFSFVKKNDKIIGGISQFIKDDSFLKNEEICFVVSGTKDIMHKALGIFRTKLALDLSLVDTTQEALLWIVDFPLFETTQEDLPQPDLTLENSNTSNRLYSLHHPFTAPCDIAILKSNPQKALAKTYDLVWNGYEVGGGSLRINNPQTQELIFSLLGFSQEEVQTRFGFLVEALKYGTPPHGGLALGLDRLVMLFTKTNNIKDVIAFPKTQSAKDLMLEAPSAVDQEQLNTLKLKFKCNCN</sequence>
<gene>
    <name evidence="1" type="primary">aspS</name>
    <name type="ordered locus">PAM_128</name>
</gene>
<evidence type="ECO:0000255" key="1">
    <source>
        <dbReference type="HAMAP-Rule" id="MF_00044"/>
    </source>
</evidence>